<protein>
    <recommendedName>
        <fullName evidence="1">Phosphoadenosine 5'-phosphosulfate reductase</fullName>
        <shortName evidence="1">PAPS reductase</shortName>
        <ecNumber evidence="1">1.8.4.8</ecNumber>
    </recommendedName>
    <alternativeName>
        <fullName evidence="1">3'-phosphoadenylylsulfate reductase</fullName>
    </alternativeName>
    <alternativeName>
        <fullName evidence="1">PAPS reductase, thioredoxin dependent</fullName>
    </alternativeName>
    <alternativeName>
        <fullName evidence="1">PAPS sulfotransferase</fullName>
    </alternativeName>
    <alternativeName>
        <fullName evidence="1">PAdoPS reductase</fullName>
    </alternativeName>
</protein>
<comment type="function">
    <text evidence="1">Catalyzes the formation of sulfite from phosphoadenosine 5'-phosphosulfate (PAPS) using thioredoxin as an electron donor.</text>
</comment>
<comment type="catalytic activity">
    <reaction evidence="1">
        <text>[thioredoxin]-disulfide + sulfite + adenosine 3',5'-bisphosphate + 2 H(+) = [thioredoxin]-dithiol + 3'-phosphoadenylyl sulfate</text>
        <dbReference type="Rhea" id="RHEA:11724"/>
        <dbReference type="Rhea" id="RHEA-COMP:10698"/>
        <dbReference type="Rhea" id="RHEA-COMP:10700"/>
        <dbReference type="ChEBI" id="CHEBI:15378"/>
        <dbReference type="ChEBI" id="CHEBI:17359"/>
        <dbReference type="ChEBI" id="CHEBI:29950"/>
        <dbReference type="ChEBI" id="CHEBI:50058"/>
        <dbReference type="ChEBI" id="CHEBI:58339"/>
        <dbReference type="ChEBI" id="CHEBI:58343"/>
        <dbReference type="EC" id="1.8.4.8"/>
    </reaction>
</comment>
<comment type="pathway">
    <text evidence="1">Sulfur metabolism; hydrogen sulfide biosynthesis; sulfite from sulfate: step 3/3.</text>
</comment>
<comment type="subcellular location">
    <subcellularLocation>
        <location evidence="1">Cytoplasm</location>
    </subcellularLocation>
</comment>
<comment type="similarity">
    <text evidence="1">Belongs to the PAPS reductase family. CysH subfamily.</text>
</comment>
<accession>Q57KH9</accession>
<name>CYSH_SALCH</name>
<dbReference type="EC" id="1.8.4.8" evidence="1"/>
<dbReference type="EMBL" id="AE017220">
    <property type="protein sequence ID" value="AAX66783.1"/>
    <property type="molecule type" value="Genomic_DNA"/>
</dbReference>
<dbReference type="RefSeq" id="WP_001540809.1">
    <property type="nucleotide sequence ID" value="NC_006905.1"/>
</dbReference>
<dbReference type="SMR" id="Q57KH9"/>
<dbReference type="KEGG" id="sec:SCH_2877"/>
<dbReference type="HOGENOM" id="CLU_044089_3_0_6"/>
<dbReference type="UniPathway" id="UPA00140">
    <property type="reaction ID" value="UER00206"/>
</dbReference>
<dbReference type="Proteomes" id="UP000000538">
    <property type="component" value="Chromosome"/>
</dbReference>
<dbReference type="GO" id="GO:0005737">
    <property type="term" value="C:cytoplasm"/>
    <property type="evidence" value="ECO:0007669"/>
    <property type="project" value="UniProtKB-SubCell"/>
</dbReference>
<dbReference type="GO" id="GO:0004604">
    <property type="term" value="F:phosphoadenylyl-sulfate reductase (thioredoxin) activity"/>
    <property type="evidence" value="ECO:0007669"/>
    <property type="project" value="UniProtKB-UniRule"/>
</dbReference>
<dbReference type="GO" id="GO:0070814">
    <property type="term" value="P:hydrogen sulfide biosynthetic process"/>
    <property type="evidence" value="ECO:0007669"/>
    <property type="project" value="UniProtKB-UniRule"/>
</dbReference>
<dbReference type="GO" id="GO:0019379">
    <property type="term" value="P:sulfate assimilation, phosphoadenylyl sulfate reduction by phosphoadenylyl-sulfate reductase (thioredoxin)"/>
    <property type="evidence" value="ECO:0007669"/>
    <property type="project" value="UniProtKB-UniRule"/>
</dbReference>
<dbReference type="CDD" id="cd23945">
    <property type="entry name" value="PAPS_reductase"/>
    <property type="match status" value="1"/>
</dbReference>
<dbReference type="FunFam" id="3.40.50.620:FF:000043">
    <property type="entry name" value="Phosphoadenosine phosphosulfate reductase"/>
    <property type="match status" value="1"/>
</dbReference>
<dbReference type="Gene3D" id="3.40.50.620">
    <property type="entry name" value="HUPs"/>
    <property type="match status" value="1"/>
</dbReference>
<dbReference type="HAMAP" id="MF_00063">
    <property type="entry name" value="CysH"/>
    <property type="match status" value="1"/>
</dbReference>
<dbReference type="InterPro" id="IPR004511">
    <property type="entry name" value="PAPS/APS_Rdtase"/>
</dbReference>
<dbReference type="InterPro" id="IPR002500">
    <property type="entry name" value="PAPS_reduct_dom"/>
</dbReference>
<dbReference type="InterPro" id="IPR011800">
    <property type="entry name" value="PAPS_reductase_CysH"/>
</dbReference>
<dbReference type="InterPro" id="IPR014729">
    <property type="entry name" value="Rossmann-like_a/b/a_fold"/>
</dbReference>
<dbReference type="NCBIfam" id="TIGR00434">
    <property type="entry name" value="cysH"/>
    <property type="match status" value="1"/>
</dbReference>
<dbReference type="NCBIfam" id="TIGR02057">
    <property type="entry name" value="PAPS_reductase"/>
    <property type="match status" value="1"/>
</dbReference>
<dbReference type="NCBIfam" id="NF002537">
    <property type="entry name" value="PRK02090.1"/>
    <property type="match status" value="1"/>
</dbReference>
<dbReference type="PANTHER" id="PTHR46509">
    <property type="entry name" value="PHOSPHOADENOSINE PHOSPHOSULFATE REDUCTASE"/>
    <property type="match status" value="1"/>
</dbReference>
<dbReference type="PANTHER" id="PTHR46509:SF1">
    <property type="entry name" value="PHOSPHOADENOSINE PHOSPHOSULFATE REDUCTASE"/>
    <property type="match status" value="1"/>
</dbReference>
<dbReference type="Pfam" id="PF01507">
    <property type="entry name" value="PAPS_reduct"/>
    <property type="match status" value="1"/>
</dbReference>
<dbReference type="PIRSF" id="PIRSF000857">
    <property type="entry name" value="PAPS_reductase"/>
    <property type="match status" value="1"/>
</dbReference>
<dbReference type="SUPFAM" id="SSF52402">
    <property type="entry name" value="Adenine nucleotide alpha hydrolases-like"/>
    <property type="match status" value="1"/>
</dbReference>
<organism>
    <name type="scientific">Salmonella choleraesuis (strain SC-B67)</name>
    <dbReference type="NCBI Taxonomy" id="321314"/>
    <lineage>
        <taxon>Bacteria</taxon>
        <taxon>Pseudomonadati</taxon>
        <taxon>Pseudomonadota</taxon>
        <taxon>Gammaproteobacteria</taxon>
        <taxon>Enterobacterales</taxon>
        <taxon>Enterobacteriaceae</taxon>
        <taxon>Salmonella</taxon>
    </lineage>
</organism>
<keyword id="KW-0963">Cytoplasm</keyword>
<keyword id="KW-0560">Oxidoreductase</keyword>
<sequence>MSQLDLNALNELPKVDRVLALAEINAQLETLSAEERVAWALENLPGEYVLSSSFGIQAAVSLHLVNQIRPDIPVILTDTGYLFPETYQFIDELTDKLKLNLKVYRAGESPAWQEARYGKLWEQGVEGIEKYNDINKVEPMNRALKELKAQTWFAGLRREQSGSRAHLPVLATQRGVFKVLPIIDWDNRTVYQYLQKHGLKYHPLWDQGYLSVGDTHTTRKWEPGMAEEETRFFGLKRECGLHEG</sequence>
<reference key="1">
    <citation type="journal article" date="2005" name="Nucleic Acids Res.">
        <title>The genome sequence of Salmonella enterica serovar Choleraesuis, a highly invasive and resistant zoonotic pathogen.</title>
        <authorList>
            <person name="Chiu C.-H."/>
            <person name="Tang P."/>
            <person name="Chu C."/>
            <person name="Hu S."/>
            <person name="Bao Q."/>
            <person name="Yu J."/>
            <person name="Chou Y.-Y."/>
            <person name="Wang H.-S."/>
            <person name="Lee Y.-S."/>
        </authorList>
    </citation>
    <scope>NUCLEOTIDE SEQUENCE [LARGE SCALE GENOMIC DNA]</scope>
    <source>
        <strain>SC-B67</strain>
    </source>
</reference>
<proteinExistence type="inferred from homology"/>
<evidence type="ECO:0000255" key="1">
    <source>
        <dbReference type="HAMAP-Rule" id="MF_00063"/>
    </source>
</evidence>
<feature type="chain" id="PRO_1000008934" description="Phosphoadenosine 5'-phosphosulfate reductase">
    <location>
        <begin position="1"/>
        <end position="244"/>
    </location>
</feature>
<feature type="active site" description="Nucleophile; cysteine thiosulfonate intermediate" evidence="1">
    <location>
        <position position="239"/>
    </location>
</feature>
<gene>
    <name evidence="1" type="primary">cysH</name>
    <name type="ordered locus">SCH_2877</name>
</gene>